<gene>
    <name evidence="1" type="primary">ldh1</name>
    <name type="ordered locus">BLLJ_1101</name>
</gene>
<keyword id="KW-0963">Cytoplasm</keyword>
<keyword id="KW-0520">NAD</keyword>
<keyword id="KW-0560">Oxidoreductase</keyword>
<accession>E8MJ15</accession>
<organism>
    <name type="scientific">Bifidobacterium longum subsp. longum (strain ATCC 15707 / DSM 20219 / JCM 1217 / NCTC 11818 / E194b)</name>
    <dbReference type="NCBI Taxonomy" id="565042"/>
    <lineage>
        <taxon>Bacteria</taxon>
        <taxon>Bacillati</taxon>
        <taxon>Actinomycetota</taxon>
        <taxon>Actinomycetes</taxon>
        <taxon>Bifidobacteriales</taxon>
        <taxon>Bifidobacteriaceae</taxon>
        <taxon>Bifidobacterium</taxon>
    </lineage>
</organism>
<dbReference type="EC" id="1.1.1.27" evidence="1"/>
<dbReference type="EMBL" id="AP010888">
    <property type="protein sequence ID" value="BAJ66768.1"/>
    <property type="molecule type" value="Genomic_DNA"/>
</dbReference>
<dbReference type="RefSeq" id="WP_007056108.1">
    <property type="nucleotide sequence ID" value="NC_015067.1"/>
</dbReference>
<dbReference type="SMR" id="E8MJ15"/>
<dbReference type="GeneID" id="69578326"/>
<dbReference type="KEGG" id="blm:BLLJ_1101"/>
<dbReference type="HOGENOM" id="CLU_045401_1_2_11"/>
<dbReference type="UniPathway" id="UPA00554">
    <property type="reaction ID" value="UER00611"/>
</dbReference>
<dbReference type="GO" id="GO:0005737">
    <property type="term" value="C:cytoplasm"/>
    <property type="evidence" value="ECO:0007669"/>
    <property type="project" value="UniProtKB-SubCell"/>
</dbReference>
<dbReference type="GO" id="GO:0004459">
    <property type="term" value="F:L-lactate dehydrogenase activity"/>
    <property type="evidence" value="ECO:0007669"/>
    <property type="project" value="UniProtKB-UniRule"/>
</dbReference>
<dbReference type="GO" id="GO:0006096">
    <property type="term" value="P:glycolytic process"/>
    <property type="evidence" value="ECO:0007669"/>
    <property type="project" value="UniProtKB-UniRule"/>
</dbReference>
<dbReference type="GO" id="GO:0006089">
    <property type="term" value="P:lactate metabolic process"/>
    <property type="evidence" value="ECO:0007669"/>
    <property type="project" value="TreeGrafter"/>
</dbReference>
<dbReference type="CDD" id="cd05291">
    <property type="entry name" value="HicDH_like"/>
    <property type="match status" value="1"/>
</dbReference>
<dbReference type="Gene3D" id="3.90.110.10">
    <property type="entry name" value="Lactate dehydrogenase/glycoside hydrolase, family 4, C-terminal"/>
    <property type="match status" value="1"/>
</dbReference>
<dbReference type="Gene3D" id="3.40.50.720">
    <property type="entry name" value="NAD(P)-binding Rossmann-like Domain"/>
    <property type="match status" value="1"/>
</dbReference>
<dbReference type="HAMAP" id="MF_00488">
    <property type="entry name" value="Lactate_dehydrog"/>
    <property type="match status" value="1"/>
</dbReference>
<dbReference type="InterPro" id="IPR001557">
    <property type="entry name" value="L-lactate/malate_DH"/>
</dbReference>
<dbReference type="InterPro" id="IPR011304">
    <property type="entry name" value="L-lactate_DH"/>
</dbReference>
<dbReference type="InterPro" id="IPR018177">
    <property type="entry name" value="L-lactate_DH_AS"/>
</dbReference>
<dbReference type="InterPro" id="IPR022383">
    <property type="entry name" value="Lactate/malate_DH_C"/>
</dbReference>
<dbReference type="InterPro" id="IPR001236">
    <property type="entry name" value="Lactate/malate_DH_N"/>
</dbReference>
<dbReference type="InterPro" id="IPR015955">
    <property type="entry name" value="Lactate_DH/Glyco_Ohase_4_C"/>
</dbReference>
<dbReference type="InterPro" id="IPR036291">
    <property type="entry name" value="NAD(P)-bd_dom_sf"/>
</dbReference>
<dbReference type="NCBIfam" id="TIGR01771">
    <property type="entry name" value="L-LDH-NAD"/>
    <property type="match status" value="1"/>
</dbReference>
<dbReference type="NCBIfam" id="NF000824">
    <property type="entry name" value="PRK00066.1"/>
    <property type="match status" value="1"/>
</dbReference>
<dbReference type="PANTHER" id="PTHR43128">
    <property type="entry name" value="L-2-HYDROXYCARBOXYLATE DEHYDROGENASE (NAD(P)(+))"/>
    <property type="match status" value="1"/>
</dbReference>
<dbReference type="PANTHER" id="PTHR43128:SF31">
    <property type="entry name" value="L-LACTATE DEHYDROGENASE"/>
    <property type="match status" value="1"/>
</dbReference>
<dbReference type="Pfam" id="PF02866">
    <property type="entry name" value="Ldh_1_C"/>
    <property type="match status" value="1"/>
</dbReference>
<dbReference type="Pfam" id="PF00056">
    <property type="entry name" value="Ldh_1_N"/>
    <property type="match status" value="1"/>
</dbReference>
<dbReference type="PIRSF" id="PIRSF000102">
    <property type="entry name" value="Lac_mal_DH"/>
    <property type="match status" value="1"/>
</dbReference>
<dbReference type="PRINTS" id="PR00086">
    <property type="entry name" value="LLDHDRGNASE"/>
</dbReference>
<dbReference type="SUPFAM" id="SSF56327">
    <property type="entry name" value="LDH C-terminal domain-like"/>
    <property type="match status" value="1"/>
</dbReference>
<dbReference type="SUPFAM" id="SSF51735">
    <property type="entry name" value="NAD(P)-binding Rossmann-fold domains"/>
    <property type="match status" value="1"/>
</dbReference>
<dbReference type="PROSITE" id="PS00064">
    <property type="entry name" value="L_LDH"/>
    <property type="match status" value="1"/>
</dbReference>
<proteinExistence type="inferred from homology"/>
<comment type="function">
    <text evidence="1">Catalyzes the conversion of lactate to pyruvate.</text>
</comment>
<comment type="catalytic activity">
    <reaction evidence="1">
        <text>(S)-lactate + NAD(+) = pyruvate + NADH + H(+)</text>
        <dbReference type="Rhea" id="RHEA:23444"/>
        <dbReference type="ChEBI" id="CHEBI:15361"/>
        <dbReference type="ChEBI" id="CHEBI:15378"/>
        <dbReference type="ChEBI" id="CHEBI:16651"/>
        <dbReference type="ChEBI" id="CHEBI:57540"/>
        <dbReference type="ChEBI" id="CHEBI:57945"/>
        <dbReference type="EC" id="1.1.1.27"/>
    </reaction>
</comment>
<comment type="pathway">
    <text evidence="1">Fermentation; pyruvate fermentation to lactate; (S)-lactate from pyruvate: step 1/1.</text>
</comment>
<comment type="subunit">
    <text evidence="1">Homotetramer.</text>
</comment>
<comment type="subcellular location">
    <subcellularLocation>
        <location evidence="1">Cytoplasm</location>
    </subcellularLocation>
</comment>
<comment type="similarity">
    <text evidence="1 2">Belongs to the LDH/MDH superfamily. LDH family.</text>
</comment>
<name>LDH1_BIFL2</name>
<sequence length="316" mass="33871">MVTMNRNKVVIVGTGQVGATAAFGIVTHGLCNELVLIDCSAAKALGEARDLDDGSEFQDRHVKVRAGDYADCKDADIVVITVGRKPPANSNRMAELGFTVGLVGEVVDNVMASGFDGVIVMVSNPVDVMAWYAWKRSGLPRTQVLGTGTALDTSRLKTIIGEETGLDPRNVGGFVMGEHGDSQFTAWSTVSLGGKPFARFLADNQDRFASVSTTEIEEKTRTRGNEIVAAKGGTNFGIASTVAGIVQTILWDERRIVPVSTLLDGEYGEHDVFLGVPTELRANGANEIVELDLSEDERAKLHHSAELVREHCEGLL</sequence>
<reference key="1">
    <citation type="journal article" date="2011" name="Nature">
        <title>Bifidobacteria can protect from enteropathogenic infection through production of acetate.</title>
        <authorList>
            <person name="Fukuda S."/>
            <person name="Toh H."/>
            <person name="Hase K."/>
            <person name="Oshima K."/>
            <person name="Nakanishi Y."/>
            <person name="Yoshimura K."/>
            <person name="Tobe T."/>
            <person name="Clarke J.M."/>
            <person name="Topping D.L."/>
            <person name="Suzuki T."/>
            <person name="Taylor T.D."/>
            <person name="Itoh K."/>
            <person name="Kikuchi J."/>
            <person name="Morita H."/>
            <person name="Hattori M."/>
            <person name="Ohno H."/>
        </authorList>
    </citation>
    <scope>NUCLEOTIDE SEQUENCE [LARGE SCALE GENOMIC DNA]</scope>
    <source>
        <strain>ATCC 15707 / DSM 20219 / CCUG 28903 / JCM 1217 / NCIMB 702259 / NCTC 11818 / E194b</strain>
    </source>
</reference>
<evidence type="ECO:0000255" key="1">
    <source>
        <dbReference type="HAMAP-Rule" id="MF_00488"/>
    </source>
</evidence>
<evidence type="ECO:0000305" key="2"/>
<protein>
    <recommendedName>
        <fullName evidence="1">L-lactate dehydrogenase 1</fullName>
        <shortName evidence="1">L-LDH 1</shortName>
        <ecNumber evidence="1">1.1.1.27</ecNumber>
    </recommendedName>
</protein>
<feature type="chain" id="PRO_0000409352" description="L-lactate dehydrogenase 1">
    <location>
        <begin position="1"/>
        <end position="316"/>
    </location>
</feature>
<feature type="active site" description="Proton acceptor" evidence="1">
    <location>
        <position position="179"/>
    </location>
</feature>
<feature type="binding site" evidence="1">
    <location>
        <position position="17"/>
    </location>
    <ligand>
        <name>NAD(+)</name>
        <dbReference type="ChEBI" id="CHEBI:57540"/>
    </ligand>
</feature>
<feature type="binding site" evidence="1">
    <location>
        <position position="38"/>
    </location>
    <ligand>
        <name>NAD(+)</name>
        <dbReference type="ChEBI" id="CHEBI:57540"/>
    </ligand>
</feature>
<feature type="binding site" evidence="1">
    <location>
        <position position="43"/>
    </location>
    <ligand>
        <name>NAD(+)</name>
        <dbReference type="ChEBI" id="CHEBI:57540"/>
    </ligand>
</feature>
<feature type="binding site" evidence="1">
    <location>
        <position position="69"/>
    </location>
    <ligand>
        <name>NAD(+)</name>
        <dbReference type="ChEBI" id="CHEBI:57540"/>
    </ligand>
</feature>
<feature type="binding site" evidence="1">
    <location>
        <position position="92"/>
    </location>
    <ligand>
        <name>substrate</name>
    </ligand>
</feature>
<feature type="binding site" evidence="1">
    <location>
        <begin position="122"/>
        <end position="124"/>
    </location>
    <ligand>
        <name>NAD(+)</name>
        <dbReference type="ChEBI" id="CHEBI:57540"/>
    </ligand>
</feature>
<feature type="binding site" evidence="1">
    <location>
        <begin position="124"/>
        <end position="127"/>
    </location>
    <ligand>
        <name>substrate</name>
    </ligand>
</feature>
<feature type="binding site" evidence="1">
    <location>
        <position position="147"/>
    </location>
    <ligand>
        <name>NAD(+)</name>
        <dbReference type="ChEBI" id="CHEBI:57540"/>
    </ligand>
</feature>
<feature type="binding site" evidence="1">
    <location>
        <begin position="152"/>
        <end position="155"/>
    </location>
    <ligand>
        <name>substrate</name>
    </ligand>
</feature>
<feature type="binding site" evidence="1">
    <location>
        <position position="234"/>
    </location>
    <ligand>
        <name>substrate</name>
    </ligand>
</feature>